<comment type="function">
    <text evidence="1 2">Allows bacterial pathogens to use the host heme as an iron source. Catalyzes the oxidative degradation of the heme macrocyclic porphyrin ring to the oxo-bilirubin chromophore staphylobilin (a mixture of the linear tetrapyrroles 5-oxo-delta-bilirubin and 15-oxo-beta-bilirubin) in the presence of a suitable electron donor such as ascorbate or NADPH--cytochrome P450 reductase, with subsequent release of free iron.</text>
</comment>
<comment type="catalytic activity">
    <reaction evidence="1 2">
        <text>heme b + 5 AH2 + 4 O2 + 2 H(+) = delta-staphylobilin + Fe(2+) + formaldehyde + 5 A + 4 H2O</text>
        <dbReference type="Rhea" id="RHEA:37039"/>
        <dbReference type="ChEBI" id="CHEBI:13193"/>
        <dbReference type="ChEBI" id="CHEBI:15377"/>
        <dbReference type="ChEBI" id="CHEBI:15378"/>
        <dbReference type="ChEBI" id="CHEBI:15379"/>
        <dbReference type="ChEBI" id="CHEBI:16842"/>
        <dbReference type="ChEBI" id="CHEBI:17499"/>
        <dbReference type="ChEBI" id="CHEBI:29033"/>
        <dbReference type="ChEBI" id="CHEBI:60344"/>
        <dbReference type="ChEBI" id="CHEBI:74361"/>
        <dbReference type="EC" id="1.14.99.48"/>
    </reaction>
</comment>
<comment type="catalytic activity">
    <reaction evidence="1 2">
        <text>heme b + 5 AH2 + 4 O2 + 2 H(+) = beta-staphylobilin + Fe(2+) + formaldehyde + 5 A + 4 H2O</text>
        <dbReference type="Rhea" id="RHEA:37363"/>
        <dbReference type="ChEBI" id="CHEBI:13193"/>
        <dbReference type="ChEBI" id="CHEBI:15377"/>
        <dbReference type="ChEBI" id="CHEBI:15378"/>
        <dbReference type="ChEBI" id="CHEBI:15379"/>
        <dbReference type="ChEBI" id="CHEBI:16842"/>
        <dbReference type="ChEBI" id="CHEBI:17499"/>
        <dbReference type="ChEBI" id="CHEBI:29033"/>
        <dbReference type="ChEBI" id="CHEBI:60344"/>
        <dbReference type="ChEBI" id="CHEBI:74362"/>
        <dbReference type="EC" id="1.14.99.48"/>
    </reaction>
</comment>
<comment type="subunit">
    <text evidence="1">Homodimer.</text>
</comment>
<comment type="subcellular location">
    <subcellularLocation>
        <location evidence="1">Cytoplasm</location>
    </subcellularLocation>
</comment>
<comment type="induction">
    <text evidence="3">Transcriptionally regulated by iron and the ferric uptake repressor (fur) protein.</text>
</comment>
<comment type="similarity">
    <text evidence="1">Belongs to the antibiotic biosynthesis monooxygenase family. Heme-degrading monooxygenase IsdG subfamily.</text>
</comment>
<organism>
    <name type="scientific">Staphylococcus aureus (strain NCTC 8325 / PS 47)</name>
    <dbReference type="NCBI Taxonomy" id="93061"/>
    <lineage>
        <taxon>Bacteria</taxon>
        <taxon>Bacillati</taxon>
        <taxon>Bacillota</taxon>
        <taxon>Bacilli</taxon>
        <taxon>Bacillales</taxon>
        <taxon>Staphylococcaceae</taxon>
        <taxon>Staphylococcus</taxon>
    </lineage>
</organism>
<sequence>MFMAENRLQLQKGSAEETIERFYNRQGIETIEGFQQMFVTKTLNTEDTDEVKILTIWESEDSFNNWLNSDVFKEAHKNVRLKSDDDGQQSPILSNKVFKYDIGYHYQK</sequence>
<name>HDOX2_STAA8</name>
<keyword id="KW-0963">Cytoplasm</keyword>
<keyword id="KW-0349">Heme</keyword>
<keyword id="KW-0408">Iron</keyword>
<keyword id="KW-0479">Metal-binding</keyword>
<keyword id="KW-0503">Monooxygenase</keyword>
<keyword id="KW-0560">Oxidoreductase</keyword>
<keyword id="KW-1185">Reference proteome</keyword>
<feature type="chain" id="PRO_0000270094" description="Heme oxygenase (staphylobilin-producing) 2">
    <location>
        <begin position="1"/>
        <end position="108"/>
    </location>
</feature>
<feature type="domain" description="ABM" evidence="1">
    <location>
        <begin position="2"/>
        <end position="93"/>
    </location>
</feature>
<feature type="binding site" evidence="1">
    <location>
        <position position="6"/>
    </location>
    <ligand>
        <name>Fe cation</name>
        <dbReference type="ChEBI" id="CHEBI:24875"/>
    </ligand>
</feature>
<feature type="binding site" evidence="1">
    <location>
        <begin position="21"/>
        <end position="28"/>
    </location>
    <ligand>
        <name>heme</name>
        <dbReference type="ChEBI" id="CHEBI:30413"/>
    </ligand>
</feature>
<feature type="binding site" description="axial binding residue" evidence="1">
    <location>
        <position position="76"/>
    </location>
    <ligand>
        <name>heme</name>
        <dbReference type="ChEBI" id="CHEBI:30413"/>
    </ligand>
    <ligandPart>
        <name>Fe</name>
        <dbReference type="ChEBI" id="CHEBI:18248"/>
    </ligandPart>
</feature>
<feature type="site" description="Transition state stabilizer" evidence="1">
    <location>
        <position position="66"/>
    </location>
</feature>
<proteinExistence type="evidence at protein level"/>
<dbReference type="EC" id="1.14.99.48" evidence="1 2"/>
<dbReference type="EMBL" id="CP000253">
    <property type="protein sequence ID" value="ABD29311.1"/>
    <property type="molecule type" value="Genomic_DNA"/>
</dbReference>
<dbReference type="RefSeq" id="WP_000480603.1">
    <property type="nucleotide sequence ID" value="NZ_LS483365.1"/>
</dbReference>
<dbReference type="RefSeq" id="YP_498730.1">
    <property type="nucleotide sequence ID" value="NC_007795.1"/>
</dbReference>
<dbReference type="SMR" id="Q2G1J2"/>
<dbReference type="STRING" id="93061.SAOUHSC_00130"/>
<dbReference type="PaxDb" id="1280-SAXN108_0151"/>
<dbReference type="GeneID" id="3919839"/>
<dbReference type="KEGG" id="sao:SAOUHSC_00130"/>
<dbReference type="PATRIC" id="fig|93061.5.peg.122"/>
<dbReference type="eggNOG" id="COG2329">
    <property type="taxonomic scope" value="Bacteria"/>
</dbReference>
<dbReference type="HOGENOM" id="CLU_141544_2_1_9"/>
<dbReference type="OrthoDB" id="384737at2"/>
<dbReference type="PRO" id="PR:Q2G1J2"/>
<dbReference type="Proteomes" id="UP000008816">
    <property type="component" value="Chromosome"/>
</dbReference>
<dbReference type="GO" id="GO:0005737">
    <property type="term" value="C:cytoplasm"/>
    <property type="evidence" value="ECO:0007669"/>
    <property type="project" value="UniProtKB-SubCell"/>
</dbReference>
<dbReference type="GO" id="GO:0020037">
    <property type="term" value="F:heme binding"/>
    <property type="evidence" value="ECO:0007669"/>
    <property type="project" value="UniProtKB-UniRule"/>
</dbReference>
<dbReference type="GO" id="GO:0004392">
    <property type="term" value="F:heme oxygenase (decyclizing) activity"/>
    <property type="evidence" value="ECO:0000318"/>
    <property type="project" value="GO_Central"/>
</dbReference>
<dbReference type="GO" id="GO:0005506">
    <property type="term" value="F:iron ion binding"/>
    <property type="evidence" value="ECO:0007669"/>
    <property type="project" value="UniProtKB-UniRule"/>
</dbReference>
<dbReference type="GO" id="GO:0042167">
    <property type="term" value="P:heme catabolic process"/>
    <property type="evidence" value="ECO:0000318"/>
    <property type="project" value="GO_Central"/>
</dbReference>
<dbReference type="GO" id="GO:0033212">
    <property type="term" value="P:iron import into cell"/>
    <property type="evidence" value="ECO:0007669"/>
    <property type="project" value="InterPro"/>
</dbReference>
<dbReference type="Gene3D" id="3.30.70.100">
    <property type="match status" value="1"/>
</dbReference>
<dbReference type="HAMAP" id="MF_01272">
    <property type="entry name" value="Heme_degrading_monooxygenase"/>
    <property type="match status" value="1"/>
</dbReference>
<dbReference type="InterPro" id="IPR007138">
    <property type="entry name" value="ABM_dom"/>
</dbReference>
<dbReference type="InterPro" id="IPR011008">
    <property type="entry name" value="Dimeric_a/b-barrel"/>
</dbReference>
<dbReference type="InterPro" id="IPR050404">
    <property type="entry name" value="Heme-degrading_MO"/>
</dbReference>
<dbReference type="InterPro" id="IPR023953">
    <property type="entry name" value="IsdG"/>
</dbReference>
<dbReference type="NCBIfam" id="NF009838">
    <property type="entry name" value="PRK13313.1"/>
    <property type="match status" value="1"/>
</dbReference>
<dbReference type="PANTHER" id="PTHR34474:SF4">
    <property type="entry name" value="HEME OXYGENASE (STAPHYLOBILIN-PRODUCING) 1"/>
    <property type="match status" value="1"/>
</dbReference>
<dbReference type="PANTHER" id="PTHR34474">
    <property type="entry name" value="SIGNAL TRANSDUCTION PROTEIN TRAP"/>
    <property type="match status" value="1"/>
</dbReference>
<dbReference type="Pfam" id="PF03992">
    <property type="entry name" value="ABM"/>
    <property type="match status" value="1"/>
</dbReference>
<dbReference type="SUPFAM" id="SSF54909">
    <property type="entry name" value="Dimeric alpha+beta barrel"/>
    <property type="match status" value="1"/>
</dbReference>
<dbReference type="PROSITE" id="PS51725">
    <property type="entry name" value="ABM"/>
    <property type="match status" value="1"/>
</dbReference>
<accession>Q2G1J2</accession>
<evidence type="ECO:0000255" key="1">
    <source>
        <dbReference type="HAMAP-Rule" id="MF_01272"/>
    </source>
</evidence>
<evidence type="ECO:0000269" key="2">
    <source>
    </source>
</evidence>
<evidence type="ECO:0000305" key="3"/>
<gene>
    <name type="primary">isdI</name>
    <name type="ordered locus">SAOUHSC_00130</name>
</gene>
<protein>
    <recommendedName>
        <fullName evidence="1">Heme oxygenase (staphylobilin-producing) 2</fullName>
        <ecNumber evidence="1 2">1.14.99.48</ecNumber>
    </recommendedName>
    <alternativeName>
        <fullName evidence="1">Heme-degrading monooxygenase 2</fullName>
    </alternativeName>
    <alternativeName>
        <fullName evidence="1">Iron-regulated surface determinant 2</fullName>
    </alternativeName>
    <alternativeName>
        <fullName evidence="1">Iron-responsive surface determinant 2</fullName>
    </alternativeName>
</protein>
<reference key="1">
    <citation type="book" date="2006" name="Gram positive pathogens, 2nd edition">
        <title>The Staphylococcus aureus NCTC 8325 genome.</title>
        <editorList>
            <person name="Fischetti V."/>
            <person name="Novick R."/>
            <person name="Ferretti J."/>
            <person name="Portnoy D."/>
            <person name="Rood J."/>
        </editorList>
        <authorList>
            <person name="Gillaspy A.F."/>
            <person name="Worrell V."/>
            <person name="Orvis J."/>
            <person name="Roe B.A."/>
            <person name="Dyer D.W."/>
            <person name="Iandolo J.J."/>
        </authorList>
    </citation>
    <scope>NUCLEOTIDE SEQUENCE [LARGE SCALE GENOMIC DNA]</scope>
    <source>
        <strain>NCTC 8325 / PS 47</strain>
    </source>
</reference>
<reference key="2">
    <citation type="journal article" date="2004" name="J. Biol. Chem.">
        <title>IsdG and IsdI, heme-degrading enzymes in the cytoplasm of Staphylococcus aureus.</title>
        <authorList>
            <person name="Skaar E.P."/>
            <person name="Gaspar A.H."/>
            <person name="Schneewind O."/>
        </authorList>
    </citation>
    <scope>FUNCTION</scope>
    <scope>CATALYTIC ACTIVITY</scope>
</reference>